<reference key="1">
    <citation type="journal article" date="2015" name="Proc. Natl. Acad. Sci. U.S.A.">
        <title>Trichodesmium genome maintains abundant, widespread noncoding DNA in situ, despite oligotrophic lifestyle.</title>
        <authorList>
            <person name="Walworth N."/>
            <person name="Pfreundt U."/>
            <person name="Nelson W.C."/>
            <person name="Mincer T."/>
            <person name="Heidelberg J.F."/>
            <person name="Fu F."/>
            <person name="Waterbury J.B."/>
            <person name="Glavina del Rio T."/>
            <person name="Goodwin L."/>
            <person name="Kyrpides N.C."/>
            <person name="Land M.L."/>
            <person name="Woyke T."/>
            <person name="Hutchins D.A."/>
            <person name="Hess W.R."/>
            <person name="Webb E.A."/>
        </authorList>
    </citation>
    <scope>NUCLEOTIDE SEQUENCE [LARGE SCALE GENOMIC DNA]</scope>
    <source>
        <strain>IMS101</strain>
    </source>
</reference>
<name>ISPG_TRIEI</name>
<gene>
    <name evidence="1" type="primary">ispG</name>
    <name type="ordered locus">Tery_4522</name>
</gene>
<keyword id="KW-0004">4Fe-4S</keyword>
<keyword id="KW-0408">Iron</keyword>
<keyword id="KW-0411">Iron-sulfur</keyword>
<keyword id="KW-0414">Isoprene biosynthesis</keyword>
<keyword id="KW-0479">Metal-binding</keyword>
<keyword id="KW-0560">Oxidoreductase</keyword>
<protein>
    <recommendedName>
        <fullName evidence="1">4-hydroxy-3-methylbut-2-en-1-yl diphosphate synthase (ferredoxin)</fullName>
        <ecNumber evidence="1">1.17.7.1</ecNumber>
    </recommendedName>
    <alternativeName>
        <fullName evidence="1">1-hydroxy-2-methyl-2-(E)-butenyl 4-diphosphate synthase</fullName>
    </alternativeName>
</protein>
<organism>
    <name type="scientific">Trichodesmium erythraeum (strain IMS101)</name>
    <dbReference type="NCBI Taxonomy" id="203124"/>
    <lineage>
        <taxon>Bacteria</taxon>
        <taxon>Bacillati</taxon>
        <taxon>Cyanobacteriota</taxon>
        <taxon>Cyanophyceae</taxon>
        <taxon>Oscillatoriophycideae</taxon>
        <taxon>Oscillatoriales</taxon>
        <taxon>Microcoleaceae</taxon>
        <taxon>Trichodesmium</taxon>
    </lineage>
</organism>
<dbReference type="EC" id="1.17.7.1" evidence="1"/>
<dbReference type="EMBL" id="CP000393">
    <property type="protein sequence ID" value="ABG53504.1"/>
    <property type="molecule type" value="Genomic_DNA"/>
</dbReference>
<dbReference type="RefSeq" id="WP_011613826.1">
    <property type="nucleotide sequence ID" value="NC_008312.1"/>
</dbReference>
<dbReference type="SMR" id="Q10W70"/>
<dbReference type="STRING" id="203124.Tery_4522"/>
<dbReference type="KEGG" id="ter:Tery_4522"/>
<dbReference type="eggNOG" id="COG0821">
    <property type="taxonomic scope" value="Bacteria"/>
</dbReference>
<dbReference type="HOGENOM" id="CLU_042258_0_0_3"/>
<dbReference type="OrthoDB" id="9803214at2"/>
<dbReference type="UniPathway" id="UPA00056">
    <property type="reaction ID" value="UER00096"/>
</dbReference>
<dbReference type="GO" id="GO:0051539">
    <property type="term" value="F:4 iron, 4 sulfur cluster binding"/>
    <property type="evidence" value="ECO:0007669"/>
    <property type="project" value="UniProtKB-UniRule"/>
</dbReference>
<dbReference type="GO" id="GO:0046429">
    <property type="term" value="F:4-hydroxy-3-methylbut-2-en-1-yl diphosphate synthase activity (ferredoxin)"/>
    <property type="evidence" value="ECO:0007669"/>
    <property type="project" value="UniProtKB-UniRule"/>
</dbReference>
<dbReference type="GO" id="GO:0005506">
    <property type="term" value="F:iron ion binding"/>
    <property type="evidence" value="ECO:0007669"/>
    <property type="project" value="InterPro"/>
</dbReference>
<dbReference type="GO" id="GO:0019288">
    <property type="term" value="P:isopentenyl diphosphate biosynthetic process, methylerythritol 4-phosphate pathway"/>
    <property type="evidence" value="ECO:0007669"/>
    <property type="project" value="UniProtKB-UniRule"/>
</dbReference>
<dbReference type="GO" id="GO:0016114">
    <property type="term" value="P:terpenoid biosynthetic process"/>
    <property type="evidence" value="ECO:0007669"/>
    <property type="project" value="InterPro"/>
</dbReference>
<dbReference type="FunFam" id="3.20.20.20:FF:000005">
    <property type="entry name" value="4-hydroxy-3-methylbut-2-en-1-yl diphosphate synthase (flavodoxin)"/>
    <property type="match status" value="1"/>
</dbReference>
<dbReference type="Gene3D" id="3.20.20.20">
    <property type="entry name" value="Dihydropteroate synthase-like"/>
    <property type="match status" value="1"/>
</dbReference>
<dbReference type="Gene3D" id="3.30.413.10">
    <property type="entry name" value="Sulfite Reductase Hemoprotein, domain 1"/>
    <property type="match status" value="1"/>
</dbReference>
<dbReference type="HAMAP" id="MF_00159">
    <property type="entry name" value="IspG"/>
    <property type="match status" value="1"/>
</dbReference>
<dbReference type="InterPro" id="IPR011005">
    <property type="entry name" value="Dihydropteroate_synth-like_sf"/>
</dbReference>
<dbReference type="InterPro" id="IPR016425">
    <property type="entry name" value="IspG_bac"/>
</dbReference>
<dbReference type="InterPro" id="IPR004588">
    <property type="entry name" value="IspG_bac-typ"/>
</dbReference>
<dbReference type="InterPro" id="IPR045854">
    <property type="entry name" value="NO2/SO3_Rdtase_4Fe4S_sf"/>
</dbReference>
<dbReference type="NCBIfam" id="TIGR00612">
    <property type="entry name" value="ispG_gcpE"/>
    <property type="match status" value="1"/>
</dbReference>
<dbReference type="NCBIfam" id="NF001540">
    <property type="entry name" value="PRK00366.1"/>
    <property type="match status" value="1"/>
</dbReference>
<dbReference type="PANTHER" id="PTHR30454">
    <property type="entry name" value="4-HYDROXY-3-METHYLBUT-2-EN-1-YL DIPHOSPHATE SYNTHASE"/>
    <property type="match status" value="1"/>
</dbReference>
<dbReference type="PANTHER" id="PTHR30454:SF0">
    <property type="entry name" value="4-HYDROXY-3-METHYLBUT-2-EN-1-YL DIPHOSPHATE SYNTHASE (FERREDOXIN), CHLOROPLASTIC"/>
    <property type="match status" value="1"/>
</dbReference>
<dbReference type="Pfam" id="PF04551">
    <property type="entry name" value="GcpE"/>
    <property type="match status" value="1"/>
</dbReference>
<dbReference type="PIRSF" id="PIRSF004640">
    <property type="entry name" value="IspG"/>
    <property type="match status" value="1"/>
</dbReference>
<dbReference type="SUPFAM" id="SSF56014">
    <property type="entry name" value="Nitrite and sulphite reductase 4Fe-4S domain-like"/>
    <property type="match status" value="1"/>
</dbReference>
<feature type="chain" id="PRO_1000011539" description="4-hydroxy-3-methylbut-2-en-1-yl diphosphate synthase (ferredoxin)">
    <location>
        <begin position="1"/>
        <end position="406"/>
    </location>
</feature>
<feature type="binding site" evidence="1">
    <location>
        <position position="315"/>
    </location>
    <ligand>
        <name>[4Fe-4S] cluster</name>
        <dbReference type="ChEBI" id="CHEBI:49883"/>
    </ligand>
</feature>
<feature type="binding site" evidence="1">
    <location>
        <position position="318"/>
    </location>
    <ligand>
        <name>[4Fe-4S] cluster</name>
        <dbReference type="ChEBI" id="CHEBI:49883"/>
    </ligand>
</feature>
<feature type="binding site" evidence="1">
    <location>
        <position position="349"/>
    </location>
    <ligand>
        <name>[4Fe-4S] cluster</name>
        <dbReference type="ChEBI" id="CHEBI:49883"/>
    </ligand>
</feature>
<feature type="binding site" evidence="1">
    <location>
        <position position="356"/>
    </location>
    <ligand>
        <name>[4Fe-4S] cluster</name>
        <dbReference type="ChEBI" id="CHEBI:49883"/>
    </ligand>
</feature>
<accession>Q10W70</accession>
<sequence>MQTLANPSKTPINQAVFDTTIHRRKTRSVKVGDITIGGGHPVVVQSMINEDTLDIERSVAAIRRLHEIGCEIVRVTVPSIAHAKSLGEIKQKLAETYKPVPLVADVHHNGMKIALEVAKQVDKVRINPGLYVFEKPQAERNEYTQAEFEEIGDKIRQTLKPLVVSLRDQNKAMRIGVNHGSLSERMLFTYGDTPEGMVESALEFIKICESLKYYNLVISLKASRVPVMLAAYRLMVKRMDELGMPYPLHLGVTEAGDGDYGRVKSTAGIGTLLAEGIGDTIRVSLTEAPEKEIPVCYSILQALGLRKTMVEYVACPSCGRTLFNLENVLHEVREATKHLTGLDIAVMGCIVNGPGEMADADYGYVGKQSGYISLYRGREEIKKVHESQGVEELINLIKADGRWVEP</sequence>
<proteinExistence type="inferred from homology"/>
<evidence type="ECO:0000255" key="1">
    <source>
        <dbReference type="HAMAP-Rule" id="MF_00159"/>
    </source>
</evidence>
<comment type="function">
    <text evidence="1">Converts 2C-methyl-D-erythritol 2,4-cyclodiphosphate (ME-2,4cPP) into 1-hydroxy-2-methyl-2-(E)-butenyl 4-diphosphate.</text>
</comment>
<comment type="catalytic activity">
    <reaction evidence="1">
        <text>(2E)-4-hydroxy-3-methylbut-2-enyl diphosphate + 2 oxidized [2Fe-2S]-[ferredoxin] + H2O = 2-C-methyl-D-erythritol 2,4-cyclic diphosphate + 2 reduced [2Fe-2S]-[ferredoxin] + H(+)</text>
        <dbReference type="Rhea" id="RHEA:26119"/>
        <dbReference type="Rhea" id="RHEA-COMP:10000"/>
        <dbReference type="Rhea" id="RHEA-COMP:10001"/>
        <dbReference type="ChEBI" id="CHEBI:15377"/>
        <dbReference type="ChEBI" id="CHEBI:15378"/>
        <dbReference type="ChEBI" id="CHEBI:33737"/>
        <dbReference type="ChEBI" id="CHEBI:33738"/>
        <dbReference type="ChEBI" id="CHEBI:58483"/>
        <dbReference type="ChEBI" id="CHEBI:128753"/>
        <dbReference type="EC" id="1.17.7.1"/>
    </reaction>
</comment>
<comment type="cofactor">
    <cofactor evidence="1">
        <name>[4Fe-4S] cluster</name>
        <dbReference type="ChEBI" id="CHEBI:49883"/>
    </cofactor>
    <text evidence="1">Binds 1 [4Fe-4S] cluster.</text>
</comment>
<comment type="pathway">
    <text evidence="1">Isoprenoid biosynthesis; isopentenyl diphosphate biosynthesis via DXP pathway; isopentenyl diphosphate from 1-deoxy-D-xylulose 5-phosphate: step 5/6.</text>
</comment>
<comment type="similarity">
    <text evidence="1">Belongs to the IspG family.</text>
</comment>